<name>AKTP2_DROGR</name>
<accession>B4JWF5</accession>
<protein>
    <recommendedName>
        <fullName>Protein crossbronx-like</fullName>
    </recommendedName>
</protein>
<comment type="similarity">
    <text evidence="1">Belongs to the ubiquitin-conjugating enzyme family. FTS subfamily.</text>
</comment>
<comment type="caution">
    <text evidence="2">Lacks the conserved Cys residue necessary for ubiquitin-conjugating enzyme E2 activity.</text>
</comment>
<keyword id="KW-1185">Reference proteome</keyword>
<sequence>MCLESKPGNSKTLSLINQGYQILAEYQLVEQEQLRGIYAIPSYSSCLLWFGVIFIHSGCYAESVFRFSILLPDQFPNERTLPTVIFQQDIFHPHICPISHSLDLRCLLKDWVKDEHHIWHILKYIQAIFADPEGSIIGNGVARPLTELNNFKAFHLLSQNRIDYVLRVRNSILWSCKHMFDKPPIKDPHYIVLERYLPHKHLAVMKSSHSQ</sequence>
<feature type="chain" id="PRO_0000379043" description="Protein crossbronx-like">
    <location>
        <begin position="1"/>
        <end position="211"/>
    </location>
</feature>
<feature type="domain" description="UBC core" evidence="1">
    <location>
        <begin position="17"/>
        <end position="177"/>
    </location>
</feature>
<gene>
    <name type="ORF">GH22748</name>
</gene>
<reference key="1">
    <citation type="journal article" date="2007" name="Nature">
        <title>Evolution of genes and genomes on the Drosophila phylogeny.</title>
        <authorList>
            <consortium name="Drosophila 12 genomes consortium"/>
        </authorList>
    </citation>
    <scope>NUCLEOTIDE SEQUENCE [LARGE SCALE GENOMIC DNA]</scope>
    <source>
        <strain>Tucson 15287-2541.00</strain>
    </source>
</reference>
<proteinExistence type="inferred from homology"/>
<evidence type="ECO:0000255" key="1">
    <source>
        <dbReference type="PROSITE-ProRule" id="PRU00388"/>
    </source>
</evidence>
<evidence type="ECO:0000305" key="2"/>
<organism>
    <name type="scientific">Drosophila grimshawi</name>
    <name type="common">Hawaiian fruit fly</name>
    <name type="synonym">Idiomyia grimshawi</name>
    <dbReference type="NCBI Taxonomy" id="7222"/>
    <lineage>
        <taxon>Eukaryota</taxon>
        <taxon>Metazoa</taxon>
        <taxon>Ecdysozoa</taxon>
        <taxon>Arthropoda</taxon>
        <taxon>Hexapoda</taxon>
        <taxon>Insecta</taxon>
        <taxon>Pterygota</taxon>
        <taxon>Neoptera</taxon>
        <taxon>Endopterygota</taxon>
        <taxon>Diptera</taxon>
        <taxon>Brachycera</taxon>
        <taxon>Muscomorpha</taxon>
        <taxon>Ephydroidea</taxon>
        <taxon>Drosophilidae</taxon>
        <taxon>Drosophila</taxon>
        <taxon>Hawaiian Drosophila</taxon>
    </lineage>
</organism>
<dbReference type="EMBL" id="CH916375">
    <property type="protein sequence ID" value="EDV98293.1"/>
    <property type="molecule type" value="Genomic_DNA"/>
</dbReference>
<dbReference type="SMR" id="B4JWF5"/>
<dbReference type="FunCoup" id="B4JWF5">
    <property type="interactions" value="61"/>
</dbReference>
<dbReference type="STRING" id="7222.B4JWF5"/>
<dbReference type="EnsemblMetazoa" id="FBtr0158162">
    <property type="protein sequence ID" value="FBpp0156654"/>
    <property type="gene ID" value="FBgn0130205"/>
</dbReference>
<dbReference type="EnsemblMetazoa" id="XM_001995185.3">
    <property type="protein sequence ID" value="XP_001995221.1"/>
    <property type="gene ID" value="LOC6568985"/>
</dbReference>
<dbReference type="GeneID" id="6568985"/>
<dbReference type="KEGG" id="dgr:6568985"/>
<dbReference type="eggNOG" id="KOG0429">
    <property type="taxonomic scope" value="Eukaryota"/>
</dbReference>
<dbReference type="HOGENOM" id="CLU_083049_1_0_1"/>
<dbReference type="InParanoid" id="B4JWF5"/>
<dbReference type="OMA" id="DQHHIWH"/>
<dbReference type="OrthoDB" id="5596422at2759"/>
<dbReference type="PhylomeDB" id="B4JWF5"/>
<dbReference type="Proteomes" id="UP000001070">
    <property type="component" value="Unassembled WGS sequence"/>
</dbReference>
<dbReference type="CDD" id="cd23814">
    <property type="entry name" value="UEV_AKTIP"/>
    <property type="match status" value="1"/>
</dbReference>
<dbReference type="Gene3D" id="3.10.110.10">
    <property type="entry name" value="Ubiquitin Conjugating Enzyme"/>
    <property type="match status" value="1"/>
</dbReference>
<dbReference type="InterPro" id="IPR000608">
    <property type="entry name" value="UBQ-conjugat_E2_core"/>
</dbReference>
<dbReference type="InterPro" id="IPR016135">
    <property type="entry name" value="UBQ-conjugating_enzyme/RWD"/>
</dbReference>
<dbReference type="Pfam" id="PF00179">
    <property type="entry name" value="UQ_con"/>
    <property type="match status" value="1"/>
</dbReference>
<dbReference type="SMART" id="SM00212">
    <property type="entry name" value="UBCc"/>
    <property type="match status" value="1"/>
</dbReference>
<dbReference type="SUPFAM" id="SSF54495">
    <property type="entry name" value="UBC-like"/>
    <property type="match status" value="1"/>
</dbReference>
<dbReference type="PROSITE" id="PS50127">
    <property type="entry name" value="UBC_2"/>
    <property type="match status" value="1"/>
</dbReference>